<evidence type="ECO:0000250" key="1"/>
<evidence type="ECO:0000255" key="2"/>
<evidence type="ECO:0000255" key="3">
    <source>
        <dbReference type="PROSITE-ProRule" id="PRU00059"/>
    </source>
</evidence>
<evidence type="ECO:0000255" key="4">
    <source>
        <dbReference type="PROSITE-ProRule" id="PRU00076"/>
    </source>
</evidence>
<evidence type="ECO:0000255" key="5">
    <source>
        <dbReference type="PROSITE-ProRule" id="PRU01211"/>
    </source>
</evidence>
<evidence type="ECO:0000269" key="6">
    <source>
    </source>
</evidence>
<evidence type="ECO:0000269" key="7">
    <source>
    </source>
</evidence>
<evidence type="ECO:0000305" key="8"/>
<dbReference type="EC" id="3.4.24.-"/>
<dbReference type="EMBL" id="M76976">
    <property type="protein sequence ID" value="AAA28491.1"/>
    <property type="status" value="ALT_INIT"/>
    <property type="molecule type" value="mRNA"/>
</dbReference>
<dbReference type="EMBL" id="U04239">
    <property type="protein sequence ID" value="AAC46482.1"/>
    <property type="status" value="ALT_INIT"/>
    <property type="molecule type" value="Unassigned_DNA"/>
</dbReference>
<dbReference type="EMBL" id="AE014297">
    <property type="protein sequence ID" value="AAF56329.2"/>
    <property type="molecule type" value="Genomic_DNA"/>
</dbReference>
<dbReference type="PIR" id="A39288">
    <property type="entry name" value="A39288"/>
</dbReference>
<dbReference type="RefSeq" id="NP_524487.2">
    <property type="nucleotide sequence ID" value="NM_079763.4"/>
</dbReference>
<dbReference type="SMR" id="P25723"/>
<dbReference type="BioGRID" id="67870">
    <property type="interactions" value="7"/>
</dbReference>
<dbReference type="DIP" id="DIP-22889N"/>
<dbReference type="FunCoup" id="P25723">
    <property type="interactions" value="11"/>
</dbReference>
<dbReference type="IntAct" id="P25723">
    <property type="interactions" value="1"/>
</dbReference>
<dbReference type="STRING" id="7227.FBpp0084070"/>
<dbReference type="MEROPS" id="M12.010"/>
<dbReference type="GlyCosmos" id="P25723">
    <property type="glycosylation" value="8 sites, No reported glycans"/>
</dbReference>
<dbReference type="GlyGen" id="P25723">
    <property type="glycosylation" value="9 sites"/>
</dbReference>
<dbReference type="PaxDb" id="7227-FBpp0084070"/>
<dbReference type="EnsemblMetazoa" id="FBtr0084691">
    <property type="protein sequence ID" value="FBpp0084070"/>
    <property type="gene ID" value="FBgn0003719"/>
</dbReference>
<dbReference type="GeneID" id="42945"/>
<dbReference type="KEGG" id="dme:Dmel_CG6868"/>
<dbReference type="UCSC" id="CG6868-RA">
    <property type="organism name" value="d. melanogaster"/>
</dbReference>
<dbReference type="AGR" id="FB:FBgn0003719"/>
<dbReference type="CTD" id="42945"/>
<dbReference type="FlyBase" id="FBgn0003719">
    <property type="gene designation" value="tld"/>
</dbReference>
<dbReference type="VEuPathDB" id="VectorBase:FBgn0003719"/>
<dbReference type="eggNOG" id="KOG3714">
    <property type="taxonomic scope" value="Eukaryota"/>
</dbReference>
<dbReference type="HOGENOM" id="CLU_005140_0_0_1"/>
<dbReference type="InParanoid" id="P25723"/>
<dbReference type="OMA" id="RTVQTIN"/>
<dbReference type="OrthoDB" id="431034at2759"/>
<dbReference type="PhylomeDB" id="P25723"/>
<dbReference type="BRENDA" id="3.4.24.19">
    <property type="organism ID" value="1994"/>
</dbReference>
<dbReference type="Reactome" id="R-DME-1474228">
    <property type="pathway name" value="Degradation of the extracellular matrix"/>
</dbReference>
<dbReference type="Reactome" id="R-DME-1650814">
    <property type="pathway name" value="Collagen biosynthesis and modifying enzymes"/>
</dbReference>
<dbReference type="Reactome" id="R-DME-2243919">
    <property type="pathway name" value="Crosslinking of collagen fibrils"/>
</dbReference>
<dbReference type="SignaLink" id="P25723"/>
<dbReference type="BioGRID-ORCS" id="42945">
    <property type="hits" value="0 hits in 3 CRISPR screens"/>
</dbReference>
<dbReference type="GenomeRNAi" id="42945"/>
<dbReference type="PRO" id="PR:P25723"/>
<dbReference type="Proteomes" id="UP000000803">
    <property type="component" value="Chromosome 3R"/>
</dbReference>
<dbReference type="Bgee" id="FBgn0003719">
    <property type="expression patterns" value="Expressed in columnar neuron T1 (Drosophila) in insect head and 50 other cell types or tissues"/>
</dbReference>
<dbReference type="ExpressionAtlas" id="P25723">
    <property type="expression patterns" value="baseline and differential"/>
</dbReference>
<dbReference type="GO" id="GO:0005615">
    <property type="term" value="C:extracellular space"/>
    <property type="evidence" value="ECO:0000314"/>
    <property type="project" value="FlyBase"/>
</dbReference>
<dbReference type="GO" id="GO:0005509">
    <property type="term" value="F:calcium ion binding"/>
    <property type="evidence" value="ECO:0007669"/>
    <property type="project" value="InterPro"/>
</dbReference>
<dbReference type="GO" id="GO:0005518">
    <property type="term" value="F:collagen binding"/>
    <property type="evidence" value="ECO:0000314"/>
    <property type="project" value="FlyBase"/>
</dbReference>
<dbReference type="GO" id="GO:0004222">
    <property type="term" value="F:metalloendopeptidase activity"/>
    <property type="evidence" value="ECO:0000314"/>
    <property type="project" value="FlyBase"/>
</dbReference>
<dbReference type="GO" id="GO:0008270">
    <property type="term" value="F:zinc ion binding"/>
    <property type="evidence" value="ECO:0007669"/>
    <property type="project" value="InterPro"/>
</dbReference>
<dbReference type="GO" id="GO:0007378">
    <property type="term" value="P:amnioserosa formation"/>
    <property type="evidence" value="ECO:0000315"/>
    <property type="project" value="FlyBase"/>
</dbReference>
<dbReference type="GO" id="GO:0009953">
    <property type="term" value="P:dorsal/ventral pattern formation"/>
    <property type="evidence" value="ECO:0000318"/>
    <property type="project" value="GO_Central"/>
</dbReference>
<dbReference type="GO" id="GO:0008586">
    <property type="term" value="P:imaginal disc-derived wing vein morphogenesis"/>
    <property type="evidence" value="ECO:0000315"/>
    <property type="project" value="FlyBase"/>
</dbReference>
<dbReference type="GO" id="GO:0007313">
    <property type="term" value="P:maternal specification of dorsal/ventral axis, oocyte, soma encoded"/>
    <property type="evidence" value="ECO:0000315"/>
    <property type="project" value="FlyBase"/>
</dbReference>
<dbReference type="GO" id="GO:0032927">
    <property type="term" value="P:positive regulation of activin receptor signaling pathway"/>
    <property type="evidence" value="ECO:0000314"/>
    <property type="project" value="FlyBase"/>
</dbReference>
<dbReference type="GO" id="GO:0030513">
    <property type="term" value="P:positive regulation of BMP signaling pathway"/>
    <property type="evidence" value="ECO:0000314"/>
    <property type="project" value="FlyBase"/>
</dbReference>
<dbReference type="GO" id="GO:0016485">
    <property type="term" value="P:protein processing"/>
    <property type="evidence" value="ECO:0000314"/>
    <property type="project" value="FlyBase"/>
</dbReference>
<dbReference type="GO" id="GO:0006508">
    <property type="term" value="P:proteolysis"/>
    <property type="evidence" value="ECO:0000314"/>
    <property type="project" value="FlyBase"/>
</dbReference>
<dbReference type="GO" id="GO:0045464">
    <property type="term" value="P:R8 cell fate specification"/>
    <property type="evidence" value="ECO:0000315"/>
    <property type="project" value="FlyBase"/>
</dbReference>
<dbReference type="CDD" id="cd00041">
    <property type="entry name" value="CUB"/>
    <property type="match status" value="5"/>
</dbReference>
<dbReference type="CDD" id="cd00054">
    <property type="entry name" value="EGF_CA"/>
    <property type="match status" value="2"/>
</dbReference>
<dbReference type="CDD" id="cd04281">
    <property type="entry name" value="ZnMc_BMP1_TLD"/>
    <property type="match status" value="1"/>
</dbReference>
<dbReference type="FunFam" id="2.10.25.10:FF:001317">
    <property type="entry name" value="Matrilin 4"/>
    <property type="match status" value="1"/>
</dbReference>
<dbReference type="FunFam" id="2.10.25.10:FF:000022">
    <property type="entry name" value="Metalloendopeptidase"/>
    <property type="match status" value="1"/>
</dbReference>
<dbReference type="FunFam" id="2.60.120.290:FF:000004">
    <property type="entry name" value="Metalloendopeptidase"/>
    <property type="match status" value="2"/>
</dbReference>
<dbReference type="FunFam" id="2.60.120.290:FF:000052">
    <property type="entry name" value="Metalloendopeptidase"/>
    <property type="match status" value="1"/>
</dbReference>
<dbReference type="FunFam" id="3.40.390.10:FF:000004">
    <property type="entry name" value="Metalloendopeptidase"/>
    <property type="match status" value="1"/>
</dbReference>
<dbReference type="FunFam" id="2.60.120.290:FF:000005">
    <property type="entry name" value="Procollagen C-endopeptidase enhancer 1"/>
    <property type="match status" value="1"/>
</dbReference>
<dbReference type="Gene3D" id="3.40.390.10">
    <property type="entry name" value="Collagenase (Catalytic Domain)"/>
    <property type="match status" value="1"/>
</dbReference>
<dbReference type="Gene3D" id="2.10.25.10">
    <property type="entry name" value="Laminin"/>
    <property type="match status" value="2"/>
</dbReference>
<dbReference type="Gene3D" id="2.60.120.290">
    <property type="entry name" value="Spermadhesin, CUB domain"/>
    <property type="match status" value="5"/>
</dbReference>
<dbReference type="InterPro" id="IPR015446">
    <property type="entry name" value="BMP_1/tolloid-like"/>
</dbReference>
<dbReference type="InterPro" id="IPR000859">
    <property type="entry name" value="CUB_dom"/>
</dbReference>
<dbReference type="InterPro" id="IPR001881">
    <property type="entry name" value="EGF-like_Ca-bd_dom"/>
</dbReference>
<dbReference type="InterPro" id="IPR000742">
    <property type="entry name" value="EGF-like_dom"/>
</dbReference>
<dbReference type="InterPro" id="IPR000152">
    <property type="entry name" value="EGF-type_Asp/Asn_hydroxyl_site"/>
</dbReference>
<dbReference type="InterPro" id="IPR018097">
    <property type="entry name" value="EGF_Ca-bd_CS"/>
</dbReference>
<dbReference type="InterPro" id="IPR024079">
    <property type="entry name" value="MetalloPept_cat_dom_sf"/>
</dbReference>
<dbReference type="InterPro" id="IPR049883">
    <property type="entry name" value="NOTCH1_EGF-like"/>
</dbReference>
<dbReference type="InterPro" id="IPR001506">
    <property type="entry name" value="Peptidase_M12A"/>
</dbReference>
<dbReference type="InterPro" id="IPR006026">
    <property type="entry name" value="Peptidase_Metallo"/>
</dbReference>
<dbReference type="InterPro" id="IPR035914">
    <property type="entry name" value="Sperma_CUB_dom_sf"/>
</dbReference>
<dbReference type="InterPro" id="IPR034036">
    <property type="entry name" value="ZnMP_TLD/BMP1"/>
</dbReference>
<dbReference type="PANTHER" id="PTHR24255">
    <property type="entry name" value="COMPLEMENT COMPONENT 1, S SUBCOMPONENT-RELATED"/>
    <property type="match status" value="1"/>
</dbReference>
<dbReference type="PANTHER" id="PTHR24255:SF31">
    <property type="entry name" value="CUBILIN-LIKE PROTEIN"/>
    <property type="match status" value="1"/>
</dbReference>
<dbReference type="Pfam" id="PF01400">
    <property type="entry name" value="Astacin"/>
    <property type="match status" value="1"/>
</dbReference>
<dbReference type="Pfam" id="PF00431">
    <property type="entry name" value="CUB"/>
    <property type="match status" value="5"/>
</dbReference>
<dbReference type="Pfam" id="PF07645">
    <property type="entry name" value="EGF_CA"/>
    <property type="match status" value="1"/>
</dbReference>
<dbReference type="Pfam" id="PF14670">
    <property type="entry name" value="FXa_inhibition"/>
    <property type="match status" value="1"/>
</dbReference>
<dbReference type="PIRSF" id="PIRSF001199">
    <property type="entry name" value="BMP_1/tolloid-like"/>
    <property type="match status" value="1"/>
</dbReference>
<dbReference type="PRINTS" id="PR00480">
    <property type="entry name" value="ASTACIN"/>
</dbReference>
<dbReference type="SMART" id="SM00042">
    <property type="entry name" value="CUB"/>
    <property type="match status" value="5"/>
</dbReference>
<dbReference type="SMART" id="SM00181">
    <property type="entry name" value="EGF"/>
    <property type="match status" value="2"/>
</dbReference>
<dbReference type="SMART" id="SM00179">
    <property type="entry name" value="EGF_CA"/>
    <property type="match status" value="2"/>
</dbReference>
<dbReference type="SMART" id="SM00235">
    <property type="entry name" value="ZnMc"/>
    <property type="match status" value="1"/>
</dbReference>
<dbReference type="SUPFAM" id="SSF57196">
    <property type="entry name" value="EGF/Laminin"/>
    <property type="match status" value="2"/>
</dbReference>
<dbReference type="SUPFAM" id="SSF55486">
    <property type="entry name" value="Metalloproteases ('zincins'), catalytic domain"/>
    <property type="match status" value="1"/>
</dbReference>
<dbReference type="SUPFAM" id="SSF49854">
    <property type="entry name" value="Spermadhesin, CUB domain"/>
    <property type="match status" value="5"/>
</dbReference>
<dbReference type="PROSITE" id="PS51864">
    <property type="entry name" value="ASTACIN"/>
    <property type="match status" value="1"/>
</dbReference>
<dbReference type="PROSITE" id="PS00010">
    <property type="entry name" value="ASX_HYDROXYL"/>
    <property type="match status" value="2"/>
</dbReference>
<dbReference type="PROSITE" id="PS01180">
    <property type="entry name" value="CUB"/>
    <property type="match status" value="5"/>
</dbReference>
<dbReference type="PROSITE" id="PS01186">
    <property type="entry name" value="EGF_2"/>
    <property type="match status" value="2"/>
</dbReference>
<dbReference type="PROSITE" id="PS50026">
    <property type="entry name" value="EGF_3"/>
    <property type="match status" value="2"/>
</dbReference>
<dbReference type="PROSITE" id="PS01187">
    <property type="entry name" value="EGF_CA"/>
    <property type="match status" value="2"/>
</dbReference>
<dbReference type="PROSITE" id="PS00142">
    <property type="entry name" value="ZINC_PROTEASE"/>
    <property type="match status" value="1"/>
</dbReference>
<keyword id="KW-0106">Calcium</keyword>
<keyword id="KW-0165">Cleavage on pair of basic residues</keyword>
<keyword id="KW-0217">Developmental protein</keyword>
<keyword id="KW-1015">Disulfide bond</keyword>
<keyword id="KW-0245">EGF-like domain</keyword>
<keyword id="KW-0325">Glycoprotein</keyword>
<keyword id="KW-0378">Hydrolase</keyword>
<keyword id="KW-0479">Metal-binding</keyword>
<keyword id="KW-0482">Metalloprotease</keyword>
<keyword id="KW-0645">Protease</keyword>
<keyword id="KW-1185">Reference proteome</keyword>
<keyword id="KW-0677">Repeat</keyword>
<keyword id="KW-0732">Signal</keyword>
<keyword id="KW-0862">Zinc</keyword>
<keyword id="KW-0865">Zymogen</keyword>
<gene>
    <name type="primary">tld</name>
    <name type="ORF">CG6868</name>
</gene>
<reference key="1">
    <citation type="journal article" date="1991" name="Cell">
        <title>The Drosophila dorsal-ventral patterning gene tolloid is related to human bone morphogenetic protein 1.</title>
        <authorList>
            <person name="Shimell M.J."/>
            <person name="Ferguson E.L."/>
            <person name="Childs S.R."/>
            <person name="O'Connor M.B."/>
        </authorList>
    </citation>
    <scope>NUCLEOTIDE SEQUENCE [MRNA]</scope>
    <source>
        <strain>Canton-S</strain>
    </source>
</reference>
<reference key="2">
    <citation type="journal article" date="1994" name="Development">
        <title>Mutational analysis of the Drosophila tolloid gene, a human BMP-1 homolog.</title>
        <authorList>
            <person name="Finelli A.L."/>
            <person name="Bossie C.A."/>
            <person name="Xie T."/>
            <person name="Padgett R.W."/>
        </authorList>
    </citation>
    <scope>NUCLEOTIDE SEQUENCE</scope>
</reference>
<reference key="3">
    <citation type="journal article" date="2000" name="Science">
        <title>The genome sequence of Drosophila melanogaster.</title>
        <authorList>
            <person name="Adams M.D."/>
            <person name="Celniker S.E."/>
            <person name="Holt R.A."/>
            <person name="Evans C.A."/>
            <person name="Gocayne J.D."/>
            <person name="Amanatides P.G."/>
            <person name="Scherer S.E."/>
            <person name="Li P.W."/>
            <person name="Hoskins R.A."/>
            <person name="Galle R.F."/>
            <person name="George R.A."/>
            <person name="Lewis S.E."/>
            <person name="Richards S."/>
            <person name="Ashburner M."/>
            <person name="Henderson S.N."/>
            <person name="Sutton G.G."/>
            <person name="Wortman J.R."/>
            <person name="Yandell M.D."/>
            <person name="Zhang Q."/>
            <person name="Chen L.X."/>
            <person name="Brandon R.C."/>
            <person name="Rogers Y.-H.C."/>
            <person name="Blazej R.G."/>
            <person name="Champe M."/>
            <person name="Pfeiffer B.D."/>
            <person name="Wan K.H."/>
            <person name="Doyle C."/>
            <person name="Baxter E.G."/>
            <person name="Helt G."/>
            <person name="Nelson C.R."/>
            <person name="Miklos G.L.G."/>
            <person name="Abril J.F."/>
            <person name="Agbayani A."/>
            <person name="An H.-J."/>
            <person name="Andrews-Pfannkoch C."/>
            <person name="Baldwin D."/>
            <person name="Ballew R.M."/>
            <person name="Basu A."/>
            <person name="Baxendale J."/>
            <person name="Bayraktaroglu L."/>
            <person name="Beasley E.M."/>
            <person name="Beeson K.Y."/>
            <person name="Benos P.V."/>
            <person name="Berman B.P."/>
            <person name="Bhandari D."/>
            <person name="Bolshakov S."/>
            <person name="Borkova D."/>
            <person name="Botchan M.R."/>
            <person name="Bouck J."/>
            <person name="Brokstein P."/>
            <person name="Brottier P."/>
            <person name="Burtis K.C."/>
            <person name="Busam D.A."/>
            <person name="Butler H."/>
            <person name="Cadieu E."/>
            <person name="Center A."/>
            <person name="Chandra I."/>
            <person name="Cherry J.M."/>
            <person name="Cawley S."/>
            <person name="Dahlke C."/>
            <person name="Davenport L.B."/>
            <person name="Davies P."/>
            <person name="de Pablos B."/>
            <person name="Delcher A."/>
            <person name="Deng Z."/>
            <person name="Mays A.D."/>
            <person name="Dew I."/>
            <person name="Dietz S.M."/>
            <person name="Dodson K."/>
            <person name="Doup L.E."/>
            <person name="Downes M."/>
            <person name="Dugan-Rocha S."/>
            <person name="Dunkov B.C."/>
            <person name="Dunn P."/>
            <person name="Durbin K.J."/>
            <person name="Evangelista C.C."/>
            <person name="Ferraz C."/>
            <person name="Ferriera S."/>
            <person name="Fleischmann W."/>
            <person name="Fosler C."/>
            <person name="Gabrielian A.E."/>
            <person name="Garg N.S."/>
            <person name="Gelbart W.M."/>
            <person name="Glasser K."/>
            <person name="Glodek A."/>
            <person name="Gong F."/>
            <person name="Gorrell J.H."/>
            <person name="Gu Z."/>
            <person name="Guan P."/>
            <person name="Harris M."/>
            <person name="Harris N.L."/>
            <person name="Harvey D.A."/>
            <person name="Heiman T.J."/>
            <person name="Hernandez J.R."/>
            <person name="Houck J."/>
            <person name="Hostin D."/>
            <person name="Houston K.A."/>
            <person name="Howland T.J."/>
            <person name="Wei M.-H."/>
            <person name="Ibegwam C."/>
            <person name="Jalali M."/>
            <person name="Kalush F."/>
            <person name="Karpen G.H."/>
            <person name="Ke Z."/>
            <person name="Kennison J.A."/>
            <person name="Ketchum K.A."/>
            <person name="Kimmel B.E."/>
            <person name="Kodira C.D."/>
            <person name="Kraft C.L."/>
            <person name="Kravitz S."/>
            <person name="Kulp D."/>
            <person name="Lai Z."/>
            <person name="Lasko P."/>
            <person name="Lei Y."/>
            <person name="Levitsky A.A."/>
            <person name="Li J.H."/>
            <person name="Li Z."/>
            <person name="Liang Y."/>
            <person name="Lin X."/>
            <person name="Liu X."/>
            <person name="Mattei B."/>
            <person name="McIntosh T.C."/>
            <person name="McLeod M.P."/>
            <person name="McPherson D."/>
            <person name="Merkulov G."/>
            <person name="Milshina N.V."/>
            <person name="Mobarry C."/>
            <person name="Morris J."/>
            <person name="Moshrefi A."/>
            <person name="Mount S.M."/>
            <person name="Moy M."/>
            <person name="Murphy B."/>
            <person name="Murphy L."/>
            <person name="Muzny D.M."/>
            <person name="Nelson D.L."/>
            <person name="Nelson D.R."/>
            <person name="Nelson K.A."/>
            <person name="Nixon K."/>
            <person name="Nusskern D.R."/>
            <person name="Pacleb J.M."/>
            <person name="Palazzolo M."/>
            <person name="Pittman G.S."/>
            <person name="Pan S."/>
            <person name="Pollard J."/>
            <person name="Puri V."/>
            <person name="Reese M.G."/>
            <person name="Reinert K."/>
            <person name="Remington K."/>
            <person name="Saunders R.D.C."/>
            <person name="Scheeler F."/>
            <person name="Shen H."/>
            <person name="Shue B.C."/>
            <person name="Siden-Kiamos I."/>
            <person name="Simpson M."/>
            <person name="Skupski M.P."/>
            <person name="Smith T.J."/>
            <person name="Spier E."/>
            <person name="Spradling A.C."/>
            <person name="Stapleton M."/>
            <person name="Strong R."/>
            <person name="Sun E."/>
            <person name="Svirskas R."/>
            <person name="Tector C."/>
            <person name="Turner R."/>
            <person name="Venter E."/>
            <person name="Wang A.H."/>
            <person name="Wang X."/>
            <person name="Wang Z.-Y."/>
            <person name="Wassarman D.A."/>
            <person name="Weinstock G.M."/>
            <person name="Weissenbach J."/>
            <person name="Williams S.M."/>
            <person name="Woodage T."/>
            <person name="Worley K.C."/>
            <person name="Wu D."/>
            <person name="Yang S."/>
            <person name="Yao Q.A."/>
            <person name="Ye J."/>
            <person name="Yeh R.-F."/>
            <person name="Zaveri J.S."/>
            <person name="Zhan M."/>
            <person name="Zhang G."/>
            <person name="Zhao Q."/>
            <person name="Zheng L."/>
            <person name="Zheng X.H."/>
            <person name="Zhong F.N."/>
            <person name="Zhong W."/>
            <person name="Zhou X."/>
            <person name="Zhu S.C."/>
            <person name="Zhu X."/>
            <person name="Smith H.O."/>
            <person name="Gibbs R.A."/>
            <person name="Myers E.W."/>
            <person name="Rubin G.M."/>
            <person name="Venter J.C."/>
        </authorList>
    </citation>
    <scope>NUCLEOTIDE SEQUENCE [LARGE SCALE GENOMIC DNA]</scope>
    <source>
        <strain>Berkeley</strain>
    </source>
</reference>
<reference key="4">
    <citation type="journal article" date="2002" name="Genome Biol.">
        <title>Annotation of the Drosophila melanogaster euchromatic genome: a systematic review.</title>
        <authorList>
            <person name="Misra S."/>
            <person name="Crosby M.A."/>
            <person name="Mungall C.J."/>
            <person name="Matthews B.B."/>
            <person name="Campbell K.S."/>
            <person name="Hradecky P."/>
            <person name="Huang Y."/>
            <person name="Kaminker J.S."/>
            <person name="Millburn G.H."/>
            <person name="Prochnik S.E."/>
            <person name="Smith C.D."/>
            <person name="Tupy J.L."/>
            <person name="Whitfield E.J."/>
            <person name="Bayraktaroglu L."/>
            <person name="Berman B.P."/>
            <person name="Bettencourt B.R."/>
            <person name="Celniker S.E."/>
            <person name="de Grey A.D.N.J."/>
            <person name="Drysdale R.A."/>
            <person name="Harris N.L."/>
            <person name="Richter J."/>
            <person name="Russo S."/>
            <person name="Schroeder A.J."/>
            <person name="Shu S.Q."/>
            <person name="Stapleton M."/>
            <person name="Yamada C."/>
            <person name="Ashburner M."/>
            <person name="Gelbart W.M."/>
            <person name="Rubin G.M."/>
            <person name="Lewis S.E."/>
        </authorList>
    </citation>
    <scope>GENOME REANNOTATION</scope>
    <source>
        <strain>Berkeley</strain>
    </source>
</reference>
<reference key="5">
    <citation type="journal article" date="2005" name="Development">
        <title>Matching catalytic activity to developmental function: tolloid-related processes Sog in order to help specify the posterior crossvein in the Drosophila wing.</title>
        <authorList>
            <person name="Serpe M."/>
            <person name="Ralston A."/>
            <person name="Blair S.S."/>
            <person name="O'Connor M.B."/>
        </authorList>
    </citation>
    <scope>FUNCTION</scope>
</reference>
<reference key="6">
    <citation type="journal article" date="2006" name="Development">
        <title>The metalloprotease tolloid-related and its TGF-beta-like substrate Dawdle regulate Drosophila motoneuron axon guidance.</title>
        <authorList>
            <person name="Serpe M."/>
            <person name="O'Connor M.B."/>
        </authorList>
    </citation>
    <scope>FUNCTION</scope>
</reference>
<name>TLD_DROME</name>
<feature type="signal peptide" evidence="2">
    <location>
        <begin position="1"/>
        <end position="36"/>
    </location>
</feature>
<feature type="propeptide" id="PRO_0000028903" evidence="2">
    <location>
        <begin position="37"/>
        <end position="136"/>
    </location>
</feature>
<feature type="chain" id="PRO_0000028904" description="Dorsal-ventral patterning protein tolloid">
    <location>
        <begin position="137"/>
        <end position="1067"/>
    </location>
</feature>
<feature type="domain" description="Peptidase M12A" evidence="5">
    <location>
        <begin position="136"/>
        <end position="338"/>
    </location>
</feature>
<feature type="domain" description="CUB 1" evidence="3">
    <location>
        <begin position="340"/>
        <end position="477"/>
    </location>
</feature>
<feature type="domain" description="CUB 2" evidence="3">
    <location>
        <begin position="478"/>
        <end position="591"/>
    </location>
</feature>
<feature type="domain" description="EGF-like 1; calcium-binding" evidence="4">
    <location>
        <begin position="591"/>
        <end position="631"/>
    </location>
</feature>
<feature type="domain" description="CUB 3" evidence="3">
    <location>
        <begin position="634"/>
        <end position="753"/>
    </location>
</feature>
<feature type="domain" description="EGF-like 2; calcium-binding" evidence="4">
    <location>
        <begin position="753"/>
        <end position="793"/>
    </location>
</feature>
<feature type="domain" description="CUB 4" evidence="3">
    <location>
        <begin position="797"/>
        <end position="909"/>
    </location>
</feature>
<feature type="domain" description="CUB 5" evidence="3">
    <location>
        <begin position="910"/>
        <end position="1026"/>
    </location>
</feature>
<feature type="short sequence motif" description="Cell attachment site" evidence="2">
    <location>
        <begin position="245"/>
        <end position="247"/>
    </location>
</feature>
<feature type="short sequence motif" description="Cell attachment site" evidence="2">
    <location>
        <begin position="325"/>
        <end position="327"/>
    </location>
</feature>
<feature type="active site" evidence="5">
    <location>
        <position position="232"/>
    </location>
</feature>
<feature type="binding site" evidence="5">
    <location>
        <position position="231"/>
    </location>
    <ligand>
        <name>Zn(2+)</name>
        <dbReference type="ChEBI" id="CHEBI:29105"/>
        <note>catalytic</note>
    </ligand>
</feature>
<feature type="binding site" evidence="5">
    <location>
        <position position="235"/>
    </location>
    <ligand>
        <name>Zn(2+)</name>
        <dbReference type="ChEBI" id="CHEBI:29105"/>
        <note>catalytic</note>
    </ligand>
</feature>
<feature type="binding site" evidence="5">
    <location>
        <position position="241"/>
    </location>
    <ligand>
        <name>Zn(2+)</name>
        <dbReference type="ChEBI" id="CHEBI:29105"/>
        <note>catalytic</note>
    </ligand>
</feature>
<feature type="glycosylation site" description="N-linked (GlcNAc...) asparagine" evidence="2">
    <location>
        <position position="176"/>
    </location>
</feature>
<feature type="glycosylation site" description="N-linked (GlcNAc...) asparagine" evidence="2">
    <location>
        <position position="441"/>
    </location>
</feature>
<feature type="glycosylation site" description="N-linked (GlcNAc...) asparagine" evidence="2">
    <location>
        <position position="543"/>
    </location>
</feature>
<feature type="glycosylation site" description="N-linked (GlcNAc...) asparagine" evidence="2">
    <location>
        <position position="644"/>
    </location>
</feature>
<feature type="glycosylation site" description="N-linked (GlcNAc...) asparagine" evidence="2">
    <location>
        <position position="677"/>
    </location>
</feature>
<feature type="glycosylation site" description="N-linked (GlcNAc...) asparagine" evidence="2">
    <location>
        <position position="791"/>
    </location>
</feature>
<feature type="glycosylation site" description="N-linked (GlcNAc...) asparagine" evidence="2">
    <location>
        <position position="864"/>
    </location>
</feature>
<feature type="glycosylation site" description="N-linked (GlcNAc...) asparagine" evidence="2">
    <location>
        <position position="918"/>
    </location>
</feature>
<feature type="disulfide bond" evidence="5">
    <location>
        <begin position="179"/>
        <end position="337"/>
    </location>
</feature>
<feature type="disulfide bond" evidence="5">
    <location>
        <begin position="201"/>
        <end position="223"/>
    </location>
</feature>
<feature type="disulfide bond" evidence="5">
    <location>
        <begin position="203"/>
        <end position="204"/>
    </location>
</feature>
<feature type="disulfide bond" evidence="1">
    <location>
        <begin position="340"/>
        <end position="390"/>
    </location>
</feature>
<feature type="disulfide bond" evidence="1">
    <location>
        <begin position="417"/>
        <end position="439"/>
    </location>
</feature>
<feature type="disulfide bond" evidence="1">
    <location>
        <begin position="478"/>
        <end position="505"/>
    </location>
</feature>
<feature type="disulfide bond" evidence="1">
    <location>
        <begin position="532"/>
        <end position="554"/>
    </location>
</feature>
<feature type="disulfide bond" evidence="1">
    <location>
        <begin position="595"/>
        <end position="606"/>
    </location>
</feature>
<feature type="disulfide bond" evidence="1">
    <location>
        <begin position="602"/>
        <end position="615"/>
    </location>
</feature>
<feature type="disulfide bond" evidence="1">
    <location>
        <begin position="617"/>
        <end position="630"/>
    </location>
</feature>
<feature type="disulfide bond" evidence="1">
    <location>
        <begin position="634"/>
        <end position="662"/>
    </location>
</feature>
<feature type="disulfide bond" evidence="1">
    <location>
        <begin position="693"/>
        <end position="716"/>
    </location>
</feature>
<feature type="disulfide bond" evidence="1">
    <location>
        <begin position="757"/>
        <end position="768"/>
    </location>
</feature>
<feature type="disulfide bond" evidence="1">
    <location>
        <begin position="764"/>
        <end position="777"/>
    </location>
</feature>
<feature type="disulfide bond" evidence="1">
    <location>
        <begin position="779"/>
        <end position="792"/>
    </location>
</feature>
<feature type="disulfide bond" evidence="1">
    <location>
        <begin position="797"/>
        <end position="823"/>
    </location>
</feature>
<feature type="disulfide bond" evidence="1">
    <location>
        <begin position="850"/>
        <end position="872"/>
    </location>
</feature>
<feature type="disulfide bond" evidence="1">
    <location>
        <begin position="910"/>
        <end position="940"/>
    </location>
</feature>
<feature type="disulfide bond" evidence="1">
    <location>
        <begin position="967"/>
        <end position="989"/>
    </location>
</feature>
<protein>
    <recommendedName>
        <fullName>Dorsal-ventral patterning protein tolloid</fullName>
        <ecNumber>3.4.24.-</ecNumber>
    </recommendedName>
</protein>
<organism>
    <name type="scientific">Drosophila melanogaster</name>
    <name type="common">Fruit fly</name>
    <dbReference type="NCBI Taxonomy" id="7227"/>
    <lineage>
        <taxon>Eukaryota</taxon>
        <taxon>Metazoa</taxon>
        <taxon>Ecdysozoa</taxon>
        <taxon>Arthropoda</taxon>
        <taxon>Hexapoda</taxon>
        <taxon>Insecta</taxon>
        <taxon>Pterygota</taxon>
        <taxon>Neoptera</taxon>
        <taxon>Endopterygota</taxon>
        <taxon>Diptera</taxon>
        <taxon>Brachycera</taxon>
        <taxon>Muscomorpha</taxon>
        <taxon>Ephydroidea</taxon>
        <taxon>Drosophilidae</taxon>
        <taxon>Drosophila</taxon>
        <taxon>Sophophora</taxon>
    </lineage>
</organism>
<proteinExistence type="evidence at transcript level"/>
<sequence>MKGMRLMPMKMKAKLVVLSVGALWMMMFFLVDYAEGRRLSQLPESECDFDFKEQPEDFFGILDSSLVPPKEPKDDIYQLKTTRQHSGRRRKQSHKSQNKAALRLPPPFLWTDDAVDVLQHSHSPTLNGQPIQRRRRAVTVRKERTWDYGVIPYEIDTIFSGAHKALFKQAMRHWENFTCIKFVERDPNLHANYIYFTVKNCGCCSFLGKNGNGRQPISIGRNCEKFGIIIHELGHTIGFHHEHARGDRDKHIVINKGNIMRGQEYNFDVLSPEEVDLPLLPYDLNSIMHYAKNSFSKSPYLDTITPIGIPPGTHLELGQRKRLSRGDIVQANLLYKCASCGRTYQQNSGHIVSPHFIYSGNGVLSEFEGSGDAGEDPSAESEFDASLTNCEWRITATNGEKVILHLQQLHLMSSDDCTQDYLEIRDGYWHKSPLVRRICGNVSGEVITTQTSRMLLNYVNRNAAKGYRGFKARFEVVCGGDLKLTKDQSIDSPNYPMDYMPDKECVWRITAPDNHQVALKFQSFELEKHDGCAYDFVEIRDGNHSDSRLIGRFCGDKLPPNIKTRSNQMYIRFVSDSSVQKLGFSAALMLDVDECKFTDHGCQHLCINTLGSYQCGCRAGYELQANGKTCEDACGGVVDATKSNGSLYSPSYPDVYPNSKQCVWEVVAPPNHAVFLNFSHFDLEGTRFHYTKCNYDYLIIYSKMRDNRLKKIGIYCGHELPPVVNSEQSILRLEFYSDRTVQRSGFVAKFVIDVDECSMNNGGCQHRCRNTFGSYQCSCRNGYTLAENGHNCTETRCKFEITTSYGVLQSPNYPEDYPRNIYCYWHFQTVLGHRIQLTFHDFEVESHQECIYDYVAIYDGRSENSSTLGIYCGGREPYAVIASTNEMFMVLATDAGLQRKGFKATFVSECGGYLRATNHSQTFYSHPRYGSRPYKRNMYCDWRIQADPESSVKIRFLHFEIEYSERCDYDYLEITEEGYSMNTIHGRFCGKHKPPIIISNSDTLLLRFQTDESNSLRGFAISFMAVDPPEDSVGEDFDAVTPFPGYLKSMYSSETGSDHLLPPSRLI</sequence>
<comment type="function">
    <text evidence="6 7">Metalloprotease which cleaves TGF-beta family ligands daw, Actbeta and myo in vitro (PubMed:17119021). Cleavage of daw enhances its signaling activity (PubMed:17119021). Cleaves dorsal-ventral patterning protein sog (PubMed:15872004). Processes sog more efficiently than metalloprotease tld which also cleaves sog (PubMed:15872004). Required for normal dorsal development. TLD may interact physically with DPP-C protein.</text>
</comment>
<comment type="cofactor">
    <cofactor evidence="5">
        <name>Zn(2+)</name>
        <dbReference type="ChEBI" id="CHEBI:29105"/>
    </cofactor>
    <text evidence="5">Binds 1 zinc ion per subunit.</text>
</comment>
<comment type="miscellaneous">
    <text>Mutations in TLD lead to a partial transformation of dorsal ectoderm into ventral ectoderm.</text>
</comment>
<comment type="sequence caution" evidence="8">
    <conflict type="erroneous initiation">
        <sequence resource="EMBL-CDS" id="AAA28491"/>
    </conflict>
</comment>
<comment type="sequence caution" evidence="8">
    <conflict type="erroneous initiation">
        <sequence resource="EMBL-CDS" id="AAC46482"/>
    </conflict>
</comment>
<accession>P25723</accession>
<accession>Q9VC46</accession>